<proteinExistence type="evidence at protein level"/>
<protein>
    <recommendedName>
        <fullName evidence="2">EEF1A lysine methyltransferase 2</fullName>
        <ecNumber evidence="2">2.1.1.-</ecNumber>
    </recommendedName>
    <alternativeName>
        <fullName evidence="2">Methyltransferase-like protein 10</fullName>
    </alternativeName>
    <alternativeName>
        <fullName evidence="2">Protein-lysine N-methyltransferase Mettl10</fullName>
    </alternativeName>
</protein>
<evidence type="ECO:0000250" key="1">
    <source>
        <dbReference type="UniProtKB" id="Q5JPI9"/>
    </source>
</evidence>
<evidence type="ECO:0000255" key="2">
    <source>
        <dbReference type="HAMAP-Rule" id="MF_03188"/>
    </source>
</evidence>
<evidence type="ECO:0000256" key="3">
    <source>
        <dbReference type="SAM" id="MobiDB-lite"/>
    </source>
</evidence>
<evidence type="ECO:0000305" key="4"/>
<evidence type="ECO:0000312" key="5">
    <source>
        <dbReference type="MGI" id="MGI:1919346"/>
    </source>
</evidence>
<name>EFMT2_MOUSE</name>
<accession>Q9D853</accession>
<accession>Q4V9Y9</accession>
<sequence length="244" mass="26864">MNADAEGHSGAVVPAQSPEGSSAADDFVPSALGTREHWDAVYERELRTFQEYGDTGEIWFGEESMNRLIRWMQKHKIPLDASVLDIGTGNGVFLVELVKHGFSNITGIDYSPSAIKLSASILEKEGLSNINLKVEDFLNPSTKLSGFHVCVDKGTYDAISLNPDNAIEKRKQYVMSLSRVLEVKGFFLITSCNWTKAELLDAFSEGFELFEELPTPKFSFGGRSGNTVAALVFQKRGTSLDKIS</sequence>
<keyword id="KW-0963">Cytoplasm</keyword>
<keyword id="KW-0489">Methyltransferase</keyword>
<keyword id="KW-0539">Nucleus</keyword>
<keyword id="KW-0597">Phosphoprotein</keyword>
<keyword id="KW-1185">Reference proteome</keyword>
<keyword id="KW-0949">S-adenosyl-L-methionine</keyword>
<keyword id="KW-0808">Transferase</keyword>
<feature type="chain" id="PRO_0000325883" description="EEF1A lysine methyltransferase 2">
    <location>
        <begin position="1"/>
        <end position="244"/>
    </location>
</feature>
<feature type="region of interest" description="Disordered" evidence="3">
    <location>
        <begin position="1"/>
        <end position="27"/>
    </location>
</feature>
<feature type="modified residue" description="Phosphoserine" evidence="1">
    <location>
        <position position="21"/>
    </location>
</feature>
<feature type="sequence conflict" description="In Ref. 2; AAH96622." evidence="4" ref="2">
    <original>N</original>
    <variation>D</variation>
    <location>
        <position position="104"/>
    </location>
</feature>
<gene>
    <name evidence="2" type="primary">Eef1akmt2</name>
    <name evidence="2 5" type="synonym">Mettl10</name>
</gene>
<dbReference type="EC" id="2.1.1.-" evidence="2"/>
<dbReference type="EMBL" id="AK008476">
    <property type="protein sequence ID" value="BAB25689.1"/>
    <property type="molecule type" value="mRNA"/>
</dbReference>
<dbReference type="EMBL" id="BC096622">
    <property type="protein sequence ID" value="AAH96622.1"/>
    <property type="molecule type" value="mRNA"/>
</dbReference>
<dbReference type="EMBL" id="BC116375">
    <property type="protein sequence ID" value="AAI16376.1"/>
    <property type="molecule type" value="mRNA"/>
</dbReference>
<dbReference type="CCDS" id="CCDS21927.1"/>
<dbReference type="RefSeq" id="NP_082371.1">
    <property type="nucleotide sequence ID" value="NM_028095.1"/>
</dbReference>
<dbReference type="SMR" id="Q9D853"/>
<dbReference type="BioGRID" id="215149">
    <property type="interactions" value="5"/>
</dbReference>
<dbReference type="FunCoup" id="Q9D853">
    <property type="interactions" value="3830"/>
</dbReference>
<dbReference type="STRING" id="10090.ENSMUSP00000033257"/>
<dbReference type="iPTMnet" id="Q9D853"/>
<dbReference type="PhosphoSitePlus" id="Q9D853"/>
<dbReference type="PaxDb" id="10090-ENSMUSP00000033257"/>
<dbReference type="PeptideAtlas" id="Q9D853"/>
<dbReference type="ProteomicsDB" id="277765"/>
<dbReference type="Pumba" id="Q9D853"/>
<dbReference type="DNASU" id="72096"/>
<dbReference type="Ensembl" id="ENSMUST00000033257.15">
    <property type="protein sequence ID" value="ENSMUSP00000033257.9"/>
    <property type="gene ID" value="ENSMUSG00000030960.17"/>
</dbReference>
<dbReference type="GeneID" id="72096"/>
<dbReference type="KEGG" id="mmu:72096"/>
<dbReference type="UCSC" id="uc009kcm.1">
    <property type="organism name" value="mouse"/>
</dbReference>
<dbReference type="AGR" id="MGI:1919346"/>
<dbReference type="CTD" id="399818"/>
<dbReference type="MGI" id="MGI:1919346">
    <property type="gene designation" value="Eef1akmt2"/>
</dbReference>
<dbReference type="VEuPathDB" id="HostDB:ENSMUSG00000030960"/>
<dbReference type="eggNOG" id="KOG1271">
    <property type="taxonomic scope" value="Eukaryota"/>
</dbReference>
<dbReference type="GeneTree" id="ENSGT00390000013399"/>
<dbReference type="HOGENOM" id="CLU_044783_2_1_1"/>
<dbReference type="InParanoid" id="Q9D853"/>
<dbReference type="OMA" id="PTPSFQF"/>
<dbReference type="OrthoDB" id="540004at2759"/>
<dbReference type="PhylomeDB" id="Q9D853"/>
<dbReference type="TreeFam" id="TF313057"/>
<dbReference type="Reactome" id="R-MMU-8876725">
    <property type="pathway name" value="Protein methylation"/>
</dbReference>
<dbReference type="BioGRID-ORCS" id="72096">
    <property type="hits" value="0 hits in 76 CRISPR screens"/>
</dbReference>
<dbReference type="ChiTaRS" id="Eef1akmt2">
    <property type="organism name" value="mouse"/>
</dbReference>
<dbReference type="PRO" id="PR:Q9D853"/>
<dbReference type="Proteomes" id="UP000000589">
    <property type="component" value="Chromosome 7"/>
</dbReference>
<dbReference type="RNAct" id="Q9D853">
    <property type="molecule type" value="protein"/>
</dbReference>
<dbReference type="Bgee" id="ENSMUSG00000030960">
    <property type="expression patterns" value="Expressed in manus and 233 other cell types or tissues"/>
</dbReference>
<dbReference type="ExpressionAtlas" id="Q9D853">
    <property type="expression patterns" value="baseline and differential"/>
</dbReference>
<dbReference type="GO" id="GO:0005737">
    <property type="term" value="C:cytoplasm"/>
    <property type="evidence" value="ECO:0000250"/>
    <property type="project" value="UniProtKB"/>
</dbReference>
<dbReference type="GO" id="GO:0005829">
    <property type="term" value="C:cytosol"/>
    <property type="evidence" value="ECO:0007669"/>
    <property type="project" value="Ensembl"/>
</dbReference>
<dbReference type="GO" id="GO:0005654">
    <property type="term" value="C:nucleoplasm"/>
    <property type="evidence" value="ECO:0007669"/>
    <property type="project" value="Ensembl"/>
</dbReference>
<dbReference type="GO" id="GO:0005634">
    <property type="term" value="C:nucleus"/>
    <property type="evidence" value="ECO:0000250"/>
    <property type="project" value="UniProtKB"/>
</dbReference>
<dbReference type="GO" id="GO:0008168">
    <property type="term" value="F:methyltransferase activity"/>
    <property type="evidence" value="ECO:0000250"/>
    <property type="project" value="UniProtKB"/>
</dbReference>
<dbReference type="GO" id="GO:0016279">
    <property type="term" value="F:protein-lysine N-methyltransferase activity"/>
    <property type="evidence" value="ECO:0000250"/>
    <property type="project" value="UniProtKB"/>
</dbReference>
<dbReference type="GO" id="GO:0018022">
    <property type="term" value="P:peptidyl-lysine methylation"/>
    <property type="evidence" value="ECO:0000250"/>
    <property type="project" value="UniProtKB"/>
</dbReference>
<dbReference type="CDD" id="cd02440">
    <property type="entry name" value="AdoMet_MTases"/>
    <property type="match status" value="1"/>
</dbReference>
<dbReference type="FunFam" id="3.40.50.150:FF:000172">
    <property type="entry name" value="EEF1A lysine methyltransferase 2"/>
    <property type="match status" value="1"/>
</dbReference>
<dbReference type="Gene3D" id="3.40.50.150">
    <property type="entry name" value="Vaccinia Virus protein VP39"/>
    <property type="match status" value="1"/>
</dbReference>
<dbReference type="HAMAP" id="MF_03188">
    <property type="entry name" value="Methyltr_EFM4"/>
    <property type="match status" value="1"/>
</dbReference>
<dbReference type="InterPro" id="IPR026635">
    <property type="entry name" value="Efm4/METTL10"/>
</dbReference>
<dbReference type="InterPro" id="IPR025714">
    <property type="entry name" value="Methyltranfer_dom"/>
</dbReference>
<dbReference type="InterPro" id="IPR029063">
    <property type="entry name" value="SAM-dependent_MTases_sf"/>
</dbReference>
<dbReference type="PANTHER" id="PTHR12843:SF5">
    <property type="entry name" value="EEF1A LYSINE METHYLTRANSFERASE 2"/>
    <property type="match status" value="1"/>
</dbReference>
<dbReference type="PANTHER" id="PTHR12843">
    <property type="entry name" value="PROTEIN-LYSINE N-METHYLTRANSFERASE METTL10"/>
    <property type="match status" value="1"/>
</dbReference>
<dbReference type="Pfam" id="PF13847">
    <property type="entry name" value="Methyltransf_31"/>
    <property type="match status" value="1"/>
</dbReference>
<dbReference type="SUPFAM" id="SSF53335">
    <property type="entry name" value="S-adenosyl-L-methionine-dependent methyltransferases"/>
    <property type="match status" value="1"/>
</dbReference>
<comment type="function">
    <text evidence="2">Protein-lysine methyltransferase that selectively catalyzes the trimethylation of EEF1A at 'Lys-318'.</text>
</comment>
<comment type="catalytic activity">
    <reaction evidence="1">
        <text>L-lysyl-[protein] + 3 S-adenosyl-L-methionine = N(6),N(6),N(6)-trimethyl-L-lysyl-[protein] + 3 S-adenosyl-L-homocysteine + 3 H(+)</text>
        <dbReference type="Rhea" id="RHEA:54192"/>
        <dbReference type="Rhea" id="RHEA-COMP:9752"/>
        <dbReference type="Rhea" id="RHEA-COMP:13826"/>
        <dbReference type="ChEBI" id="CHEBI:15378"/>
        <dbReference type="ChEBI" id="CHEBI:29969"/>
        <dbReference type="ChEBI" id="CHEBI:57856"/>
        <dbReference type="ChEBI" id="CHEBI:59789"/>
        <dbReference type="ChEBI" id="CHEBI:61961"/>
    </reaction>
    <physiologicalReaction direction="left-to-right" evidence="1">
        <dbReference type="Rhea" id="RHEA:54193"/>
    </physiologicalReaction>
</comment>
<comment type="subcellular location">
    <subcellularLocation>
        <location evidence="2">Cytoplasm</location>
    </subcellularLocation>
    <subcellularLocation>
        <location evidence="2">Nucleus</location>
    </subcellularLocation>
</comment>
<comment type="similarity">
    <text evidence="2">Belongs to the class I-like SAM-binding methyltransferase superfamily. EFM4 family.</text>
</comment>
<organism>
    <name type="scientific">Mus musculus</name>
    <name type="common">Mouse</name>
    <dbReference type="NCBI Taxonomy" id="10090"/>
    <lineage>
        <taxon>Eukaryota</taxon>
        <taxon>Metazoa</taxon>
        <taxon>Chordata</taxon>
        <taxon>Craniata</taxon>
        <taxon>Vertebrata</taxon>
        <taxon>Euteleostomi</taxon>
        <taxon>Mammalia</taxon>
        <taxon>Eutheria</taxon>
        <taxon>Euarchontoglires</taxon>
        <taxon>Glires</taxon>
        <taxon>Rodentia</taxon>
        <taxon>Myomorpha</taxon>
        <taxon>Muroidea</taxon>
        <taxon>Muridae</taxon>
        <taxon>Murinae</taxon>
        <taxon>Mus</taxon>
        <taxon>Mus</taxon>
    </lineage>
</organism>
<reference key="1">
    <citation type="journal article" date="2005" name="Science">
        <title>The transcriptional landscape of the mammalian genome.</title>
        <authorList>
            <person name="Carninci P."/>
            <person name="Kasukawa T."/>
            <person name="Katayama S."/>
            <person name="Gough J."/>
            <person name="Frith M.C."/>
            <person name="Maeda N."/>
            <person name="Oyama R."/>
            <person name="Ravasi T."/>
            <person name="Lenhard B."/>
            <person name="Wells C."/>
            <person name="Kodzius R."/>
            <person name="Shimokawa K."/>
            <person name="Bajic V.B."/>
            <person name="Brenner S.E."/>
            <person name="Batalov S."/>
            <person name="Forrest A.R."/>
            <person name="Zavolan M."/>
            <person name="Davis M.J."/>
            <person name="Wilming L.G."/>
            <person name="Aidinis V."/>
            <person name="Allen J.E."/>
            <person name="Ambesi-Impiombato A."/>
            <person name="Apweiler R."/>
            <person name="Aturaliya R.N."/>
            <person name="Bailey T.L."/>
            <person name="Bansal M."/>
            <person name="Baxter L."/>
            <person name="Beisel K.W."/>
            <person name="Bersano T."/>
            <person name="Bono H."/>
            <person name="Chalk A.M."/>
            <person name="Chiu K.P."/>
            <person name="Choudhary V."/>
            <person name="Christoffels A."/>
            <person name="Clutterbuck D.R."/>
            <person name="Crowe M.L."/>
            <person name="Dalla E."/>
            <person name="Dalrymple B.P."/>
            <person name="de Bono B."/>
            <person name="Della Gatta G."/>
            <person name="di Bernardo D."/>
            <person name="Down T."/>
            <person name="Engstrom P."/>
            <person name="Fagiolini M."/>
            <person name="Faulkner G."/>
            <person name="Fletcher C.F."/>
            <person name="Fukushima T."/>
            <person name="Furuno M."/>
            <person name="Futaki S."/>
            <person name="Gariboldi M."/>
            <person name="Georgii-Hemming P."/>
            <person name="Gingeras T.R."/>
            <person name="Gojobori T."/>
            <person name="Green R.E."/>
            <person name="Gustincich S."/>
            <person name="Harbers M."/>
            <person name="Hayashi Y."/>
            <person name="Hensch T.K."/>
            <person name="Hirokawa N."/>
            <person name="Hill D."/>
            <person name="Huminiecki L."/>
            <person name="Iacono M."/>
            <person name="Ikeo K."/>
            <person name="Iwama A."/>
            <person name="Ishikawa T."/>
            <person name="Jakt M."/>
            <person name="Kanapin A."/>
            <person name="Katoh M."/>
            <person name="Kawasawa Y."/>
            <person name="Kelso J."/>
            <person name="Kitamura H."/>
            <person name="Kitano H."/>
            <person name="Kollias G."/>
            <person name="Krishnan S.P."/>
            <person name="Kruger A."/>
            <person name="Kummerfeld S.K."/>
            <person name="Kurochkin I.V."/>
            <person name="Lareau L.F."/>
            <person name="Lazarevic D."/>
            <person name="Lipovich L."/>
            <person name="Liu J."/>
            <person name="Liuni S."/>
            <person name="McWilliam S."/>
            <person name="Madan Babu M."/>
            <person name="Madera M."/>
            <person name="Marchionni L."/>
            <person name="Matsuda H."/>
            <person name="Matsuzawa S."/>
            <person name="Miki H."/>
            <person name="Mignone F."/>
            <person name="Miyake S."/>
            <person name="Morris K."/>
            <person name="Mottagui-Tabar S."/>
            <person name="Mulder N."/>
            <person name="Nakano N."/>
            <person name="Nakauchi H."/>
            <person name="Ng P."/>
            <person name="Nilsson R."/>
            <person name="Nishiguchi S."/>
            <person name="Nishikawa S."/>
            <person name="Nori F."/>
            <person name="Ohara O."/>
            <person name="Okazaki Y."/>
            <person name="Orlando V."/>
            <person name="Pang K.C."/>
            <person name="Pavan W.J."/>
            <person name="Pavesi G."/>
            <person name="Pesole G."/>
            <person name="Petrovsky N."/>
            <person name="Piazza S."/>
            <person name="Reed J."/>
            <person name="Reid J.F."/>
            <person name="Ring B.Z."/>
            <person name="Ringwald M."/>
            <person name="Rost B."/>
            <person name="Ruan Y."/>
            <person name="Salzberg S.L."/>
            <person name="Sandelin A."/>
            <person name="Schneider C."/>
            <person name="Schoenbach C."/>
            <person name="Sekiguchi K."/>
            <person name="Semple C.A."/>
            <person name="Seno S."/>
            <person name="Sessa L."/>
            <person name="Sheng Y."/>
            <person name="Shibata Y."/>
            <person name="Shimada H."/>
            <person name="Shimada K."/>
            <person name="Silva D."/>
            <person name="Sinclair B."/>
            <person name="Sperling S."/>
            <person name="Stupka E."/>
            <person name="Sugiura K."/>
            <person name="Sultana R."/>
            <person name="Takenaka Y."/>
            <person name="Taki K."/>
            <person name="Tammoja K."/>
            <person name="Tan S.L."/>
            <person name="Tang S."/>
            <person name="Taylor M.S."/>
            <person name="Tegner J."/>
            <person name="Teichmann S.A."/>
            <person name="Ueda H.R."/>
            <person name="van Nimwegen E."/>
            <person name="Verardo R."/>
            <person name="Wei C.L."/>
            <person name="Yagi K."/>
            <person name="Yamanishi H."/>
            <person name="Zabarovsky E."/>
            <person name="Zhu S."/>
            <person name="Zimmer A."/>
            <person name="Hide W."/>
            <person name="Bult C."/>
            <person name="Grimmond S.M."/>
            <person name="Teasdale R.D."/>
            <person name="Liu E.T."/>
            <person name="Brusic V."/>
            <person name="Quackenbush J."/>
            <person name="Wahlestedt C."/>
            <person name="Mattick J.S."/>
            <person name="Hume D.A."/>
            <person name="Kai C."/>
            <person name="Sasaki D."/>
            <person name="Tomaru Y."/>
            <person name="Fukuda S."/>
            <person name="Kanamori-Katayama M."/>
            <person name="Suzuki M."/>
            <person name="Aoki J."/>
            <person name="Arakawa T."/>
            <person name="Iida J."/>
            <person name="Imamura K."/>
            <person name="Itoh M."/>
            <person name="Kato T."/>
            <person name="Kawaji H."/>
            <person name="Kawagashira N."/>
            <person name="Kawashima T."/>
            <person name="Kojima M."/>
            <person name="Kondo S."/>
            <person name="Konno H."/>
            <person name="Nakano K."/>
            <person name="Ninomiya N."/>
            <person name="Nishio T."/>
            <person name="Okada M."/>
            <person name="Plessy C."/>
            <person name="Shibata K."/>
            <person name="Shiraki T."/>
            <person name="Suzuki S."/>
            <person name="Tagami M."/>
            <person name="Waki K."/>
            <person name="Watahiki A."/>
            <person name="Okamura-Oho Y."/>
            <person name="Suzuki H."/>
            <person name="Kawai J."/>
            <person name="Hayashizaki Y."/>
        </authorList>
    </citation>
    <scope>NUCLEOTIDE SEQUENCE [LARGE SCALE MRNA]</scope>
    <source>
        <strain>C57BL/6J</strain>
        <tissue>Small intestine</tissue>
    </source>
</reference>
<reference key="2">
    <citation type="journal article" date="2004" name="Genome Res.">
        <title>The status, quality, and expansion of the NIH full-length cDNA project: the Mammalian Gene Collection (MGC).</title>
        <authorList>
            <consortium name="The MGC Project Team"/>
        </authorList>
    </citation>
    <scope>NUCLEOTIDE SEQUENCE [LARGE SCALE MRNA]</scope>
    <source>
        <strain>C57BL/6J</strain>
        <tissue>Embryo</tissue>
    </source>
</reference>
<reference key="3">
    <citation type="journal article" date="2010" name="Cell">
        <title>A tissue-specific atlas of mouse protein phosphorylation and expression.</title>
        <authorList>
            <person name="Huttlin E.L."/>
            <person name="Jedrychowski M.P."/>
            <person name="Elias J.E."/>
            <person name="Goswami T."/>
            <person name="Rad R."/>
            <person name="Beausoleil S.A."/>
            <person name="Villen J."/>
            <person name="Haas W."/>
            <person name="Sowa M.E."/>
            <person name="Gygi S.P."/>
        </authorList>
    </citation>
    <scope>IDENTIFICATION BY MASS SPECTROMETRY [LARGE SCALE ANALYSIS]</scope>
    <source>
        <tissue>Brain</tissue>
        <tissue>Kidney</tissue>
        <tissue>Lung</tissue>
        <tissue>Spleen</tissue>
        <tissue>Testis</tissue>
    </source>
</reference>